<feature type="transit peptide" description="Mitochondrion" evidence="2">
    <location>
        <begin position="1"/>
        <end status="unknown"/>
    </location>
</feature>
<feature type="chain" id="PRO_0000002082" description="Acetylornithine aminotransferase, mitochondrial">
    <location>
        <begin status="unknown"/>
        <end position="411"/>
    </location>
</feature>
<feature type="modified residue" description="N6-(pyridoxal phosphate)lysine" evidence="1">
    <location>
        <position position="262"/>
    </location>
</feature>
<accession>Q6C846</accession>
<proteinExistence type="inferred from homology"/>
<keyword id="KW-0028">Amino-acid biosynthesis</keyword>
<keyword id="KW-0032">Aminotransferase</keyword>
<keyword id="KW-0055">Arginine biosynthesis</keyword>
<keyword id="KW-0496">Mitochondrion</keyword>
<keyword id="KW-0663">Pyridoxal phosphate</keyword>
<keyword id="KW-1185">Reference proteome</keyword>
<keyword id="KW-0808">Transferase</keyword>
<keyword id="KW-0809">Transit peptide</keyword>
<name>ARGD_YARLI</name>
<sequence length="411" mass="44433">MNRFSKIRQYSTLLQTAEKYSVPTYAKPSVILTKGKGAYLWDSNDNKYIDFSAGIAVTALGHSNPEITKILAEQSSQLMHCSNLFNNEWAPRLQESLVEETLKSGGMKGARKVFLANSGTEANEAALKFARKVGTLSSPDKTEFVNFEKAFHGRTMGALSVTPNPKYQAPFAPLVPGVKTGVYNDPKAADLITEKTCGVIVEPVQGEGGVYKANDEFLQALRNKCDEVGAMLIFDEIQCGLGRTGRLWAHDKVHPDILTMAKALGNGFPIGATMVTEAVADKIAIGDHGTTYGGNPLASRVGHYVLSQVASKEVLDNVKKVSQQIRDAVAEVQEEFPELITEVRGDGLLLGIQFSKDPSKVVAAARENGLLVITAGTNTVRLVPALNIDQEAVTEGLEILKKAIRDNAKDL</sequence>
<organism>
    <name type="scientific">Yarrowia lipolytica (strain CLIB 122 / E 150)</name>
    <name type="common">Yeast</name>
    <name type="synonym">Candida lipolytica</name>
    <dbReference type="NCBI Taxonomy" id="284591"/>
    <lineage>
        <taxon>Eukaryota</taxon>
        <taxon>Fungi</taxon>
        <taxon>Dikarya</taxon>
        <taxon>Ascomycota</taxon>
        <taxon>Saccharomycotina</taxon>
        <taxon>Dipodascomycetes</taxon>
        <taxon>Dipodascales</taxon>
        <taxon>Dipodascales incertae sedis</taxon>
        <taxon>Yarrowia</taxon>
    </lineage>
</organism>
<dbReference type="EC" id="2.6.1.11"/>
<dbReference type="EMBL" id="CR382130">
    <property type="protein sequence ID" value="CAG81366.1"/>
    <property type="molecule type" value="Genomic_DNA"/>
</dbReference>
<dbReference type="RefSeq" id="XP_503166.1">
    <property type="nucleotide sequence ID" value="XM_503166.1"/>
</dbReference>
<dbReference type="SMR" id="Q6C846"/>
<dbReference type="FunCoup" id="Q6C846">
    <property type="interactions" value="275"/>
</dbReference>
<dbReference type="STRING" id="284591.Q6C846"/>
<dbReference type="EnsemblFungi" id="CAG81366">
    <property type="protein sequence ID" value="CAG81366"/>
    <property type="gene ID" value="YALI0_D22847g"/>
</dbReference>
<dbReference type="KEGG" id="yli:2910247"/>
<dbReference type="VEuPathDB" id="FungiDB:YALI0_D22847g"/>
<dbReference type="HOGENOM" id="CLU_016922_10_1_1"/>
<dbReference type="InParanoid" id="Q6C846"/>
<dbReference type="OMA" id="MVPGFKY"/>
<dbReference type="OrthoDB" id="111624at4891"/>
<dbReference type="UniPathway" id="UPA00068">
    <property type="reaction ID" value="UER00109"/>
</dbReference>
<dbReference type="Proteomes" id="UP000001300">
    <property type="component" value="Chromosome D"/>
</dbReference>
<dbReference type="GO" id="GO:0005759">
    <property type="term" value="C:mitochondrial matrix"/>
    <property type="evidence" value="ECO:0000318"/>
    <property type="project" value="GO_Central"/>
</dbReference>
<dbReference type="GO" id="GO:0042802">
    <property type="term" value="F:identical protein binding"/>
    <property type="evidence" value="ECO:0000318"/>
    <property type="project" value="GO_Central"/>
</dbReference>
<dbReference type="GO" id="GO:0003992">
    <property type="term" value="F:N2-acetyl-L-ornithine:2-oxoglutarate 5-aminotransferase activity"/>
    <property type="evidence" value="ECO:0007669"/>
    <property type="project" value="UniProtKB-EC"/>
</dbReference>
<dbReference type="GO" id="GO:0030170">
    <property type="term" value="F:pyridoxal phosphate binding"/>
    <property type="evidence" value="ECO:0000318"/>
    <property type="project" value="GO_Central"/>
</dbReference>
<dbReference type="GO" id="GO:0042450">
    <property type="term" value="P:arginine biosynthetic process via ornithine"/>
    <property type="evidence" value="ECO:0007669"/>
    <property type="project" value="EnsemblFungi"/>
</dbReference>
<dbReference type="GO" id="GO:0006526">
    <property type="term" value="P:L-arginine biosynthetic process"/>
    <property type="evidence" value="ECO:0007669"/>
    <property type="project" value="UniProtKB-UniPathway"/>
</dbReference>
<dbReference type="CDD" id="cd00610">
    <property type="entry name" value="OAT_like"/>
    <property type="match status" value="1"/>
</dbReference>
<dbReference type="FunFam" id="3.40.640.10:FF:000004">
    <property type="entry name" value="Acetylornithine aminotransferase"/>
    <property type="match status" value="1"/>
</dbReference>
<dbReference type="Gene3D" id="3.90.1150.10">
    <property type="entry name" value="Aspartate Aminotransferase, domain 1"/>
    <property type="match status" value="1"/>
</dbReference>
<dbReference type="Gene3D" id="3.40.640.10">
    <property type="entry name" value="Type I PLP-dependent aspartate aminotransferase-like (Major domain)"/>
    <property type="match status" value="1"/>
</dbReference>
<dbReference type="HAMAP" id="MF_01107">
    <property type="entry name" value="ArgD_aminotrans_3"/>
    <property type="match status" value="1"/>
</dbReference>
<dbReference type="InterPro" id="IPR004636">
    <property type="entry name" value="AcOrn/SuccOrn_fam"/>
</dbReference>
<dbReference type="InterPro" id="IPR005814">
    <property type="entry name" value="Aminotrans_3"/>
</dbReference>
<dbReference type="InterPro" id="IPR049704">
    <property type="entry name" value="Aminotrans_3_PPA_site"/>
</dbReference>
<dbReference type="InterPro" id="IPR050103">
    <property type="entry name" value="Class-III_PLP-dep_AT"/>
</dbReference>
<dbReference type="InterPro" id="IPR015424">
    <property type="entry name" value="PyrdxlP-dep_Trfase"/>
</dbReference>
<dbReference type="InterPro" id="IPR015421">
    <property type="entry name" value="PyrdxlP-dep_Trfase_major"/>
</dbReference>
<dbReference type="InterPro" id="IPR015422">
    <property type="entry name" value="PyrdxlP-dep_Trfase_small"/>
</dbReference>
<dbReference type="NCBIfam" id="TIGR00707">
    <property type="entry name" value="argD"/>
    <property type="match status" value="1"/>
</dbReference>
<dbReference type="NCBIfam" id="NF002325">
    <property type="entry name" value="PRK01278.1"/>
    <property type="match status" value="1"/>
</dbReference>
<dbReference type="PANTHER" id="PTHR11986:SF79">
    <property type="entry name" value="ACETYLORNITHINE AMINOTRANSFERASE, MITOCHONDRIAL"/>
    <property type="match status" value="1"/>
</dbReference>
<dbReference type="PANTHER" id="PTHR11986">
    <property type="entry name" value="AMINOTRANSFERASE CLASS III"/>
    <property type="match status" value="1"/>
</dbReference>
<dbReference type="Pfam" id="PF00202">
    <property type="entry name" value="Aminotran_3"/>
    <property type="match status" value="1"/>
</dbReference>
<dbReference type="PIRSF" id="PIRSF000521">
    <property type="entry name" value="Transaminase_4ab_Lys_Orn"/>
    <property type="match status" value="1"/>
</dbReference>
<dbReference type="SUPFAM" id="SSF53383">
    <property type="entry name" value="PLP-dependent transferases"/>
    <property type="match status" value="1"/>
</dbReference>
<dbReference type="PROSITE" id="PS00600">
    <property type="entry name" value="AA_TRANSFER_CLASS_3"/>
    <property type="match status" value="1"/>
</dbReference>
<evidence type="ECO:0000250" key="1"/>
<evidence type="ECO:0000255" key="2"/>
<evidence type="ECO:0000305" key="3"/>
<gene>
    <name type="primary">ARG8</name>
    <name type="ordered locus">YALI0D22847g</name>
</gene>
<protein>
    <recommendedName>
        <fullName>Acetylornithine aminotransferase, mitochondrial</fullName>
        <shortName>ACOAT</shortName>
        <ecNumber>2.6.1.11</ecNumber>
    </recommendedName>
</protein>
<reference key="1">
    <citation type="journal article" date="2004" name="Nature">
        <title>Genome evolution in yeasts.</title>
        <authorList>
            <person name="Dujon B."/>
            <person name="Sherman D."/>
            <person name="Fischer G."/>
            <person name="Durrens P."/>
            <person name="Casaregola S."/>
            <person name="Lafontaine I."/>
            <person name="de Montigny J."/>
            <person name="Marck C."/>
            <person name="Neuveglise C."/>
            <person name="Talla E."/>
            <person name="Goffard N."/>
            <person name="Frangeul L."/>
            <person name="Aigle M."/>
            <person name="Anthouard V."/>
            <person name="Babour A."/>
            <person name="Barbe V."/>
            <person name="Barnay S."/>
            <person name="Blanchin S."/>
            <person name="Beckerich J.-M."/>
            <person name="Beyne E."/>
            <person name="Bleykasten C."/>
            <person name="Boisrame A."/>
            <person name="Boyer J."/>
            <person name="Cattolico L."/>
            <person name="Confanioleri F."/>
            <person name="de Daruvar A."/>
            <person name="Despons L."/>
            <person name="Fabre E."/>
            <person name="Fairhead C."/>
            <person name="Ferry-Dumazet H."/>
            <person name="Groppi A."/>
            <person name="Hantraye F."/>
            <person name="Hennequin C."/>
            <person name="Jauniaux N."/>
            <person name="Joyet P."/>
            <person name="Kachouri R."/>
            <person name="Kerrest A."/>
            <person name="Koszul R."/>
            <person name="Lemaire M."/>
            <person name="Lesur I."/>
            <person name="Ma L."/>
            <person name="Muller H."/>
            <person name="Nicaud J.-M."/>
            <person name="Nikolski M."/>
            <person name="Oztas S."/>
            <person name="Ozier-Kalogeropoulos O."/>
            <person name="Pellenz S."/>
            <person name="Potier S."/>
            <person name="Richard G.-F."/>
            <person name="Straub M.-L."/>
            <person name="Suleau A."/>
            <person name="Swennen D."/>
            <person name="Tekaia F."/>
            <person name="Wesolowski-Louvel M."/>
            <person name="Westhof E."/>
            <person name="Wirth B."/>
            <person name="Zeniou-Meyer M."/>
            <person name="Zivanovic Y."/>
            <person name="Bolotin-Fukuhara M."/>
            <person name="Thierry A."/>
            <person name="Bouchier C."/>
            <person name="Caudron B."/>
            <person name="Scarpelli C."/>
            <person name="Gaillardin C."/>
            <person name="Weissenbach J."/>
            <person name="Wincker P."/>
            <person name="Souciet J.-L."/>
        </authorList>
    </citation>
    <scope>NUCLEOTIDE SEQUENCE [LARGE SCALE GENOMIC DNA]</scope>
    <source>
        <strain>CLIB 122 / E 150</strain>
    </source>
</reference>
<comment type="catalytic activity">
    <reaction>
        <text>N(2)-acetyl-L-ornithine + 2-oxoglutarate = N-acetyl-L-glutamate 5-semialdehyde + L-glutamate</text>
        <dbReference type="Rhea" id="RHEA:18049"/>
        <dbReference type="ChEBI" id="CHEBI:16810"/>
        <dbReference type="ChEBI" id="CHEBI:29123"/>
        <dbReference type="ChEBI" id="CHEBI:29985"/>
        <dbReference type="ChEBI" id="CHEBI:57805"/>
        <dbReference type="EC" id="2.6.1.11"/>
    </reaction>
</comment>
<comment type="cofactor">
    <cofactor evidence="1">
        <name>pyridoxal 5'-phosphate</name>
        <dbReference type="ChEBI" id="CHEBI:597326"/>
    </cofactor>
</comment>
<comment type="pathway">
    <text>Amino-acid biosynthesis; L-arginine biosynthesis; N(2)-acetyl-L-ornithine from L-glutamate: step 4/4.</text>
</comment>
<comment type="subcellular location">
    <subcellularLocation>
        <location evidence="1">Mitochondrion matrix</location>
    </subcellularLocation>
</comment>
<comment type="similarity">
    <text evidence="3">Belongs to the class-III pyridoxal-phosphate-dependent aminotransferase family.</text>
</comment>